<evidence type="ECO:0000255" key="1">
    <source>
        <dbReference type="HAMAP-Rule" id="MF_01078"/>
    </source>
</evidence>
<sequence>MVDRPLKQRFVLDTSLFLTPEIRSGDEDLEAACLDLLDLISEAKLVHNISCYMPPSIQAELTTMLEDRAISDEVLTKLDTWVITKSPAHHEVRIPADLVYEFIDEMSERVDRGLRVSEKAVRKAEESRAETVEEHDHMTEVDKVISDLRDEYRDTLRQGVLDSREDFDLLILAQELDAGVVTEDQGIINWAEDFGLRYLKGRNFPPLLREYLAADDPDRWRDES</sequence>
<proteinExistence type="inferred from homology"/>
<feature type="chain" id="PRO_0000366691" description="RNA-free ribonuclease P">
    <location>
        <begin position="1"/>
        <end position="224"/>
    </location>
</feature>
<name>RFRNP_HALMA</name>
<dbReference type="EC" id="3.1.26.5" evidence="1"/>
<dbReference type="EMBL" id="AY596297">
    <property type="protein sequence ID" value="AAV47094.1"/>
    <property type="molecule type" value="Genomic_DNA"/>
</dbReference>
<dbReference type="RefSeq" id="WP_004958916.1">
    <property type="nucleotide sequence ID" value="NZ_CP039138.1"/>
</dbReference>
<dbReference type="SMR" id="Q5V059"/>
<dbReference type="STRING" id="272569.rrnAC2265"/>
<dbReference type="PaxDb" id="272569-rrnAC2265"/>
<dbReference type="EnsemblBacteria" id="AAV47094">
    <property type="protein sequence ID" value="AAV47094"/>
    <property type="gene ID" value="rrnAC2265"/>
</dbReference>
<dbReference type="KEGG" id="hma:rrnAC2265"/>
<dbReference type="PATRIC" id="fig|272569.17.peg.2894"/>
<dbReference type="eggNOG" id="arCOG00720">
    <property type="taxonomic scope" value="Archaea"/>
</dbReference>
<dbReference type="HOGENOM" id="CLU_109672_0_0_2"/>
<dbReference type="Proteomes" id="UP000001169">
    <property type="component" value="Chromosome I"/>
</dbReference>
<dbReference type="GO" id="GO:0004526">
    <property type="term" value="F:ribonuclease P activity"/>
    <property type="evidence" value="ECO:0007669"/>
    <property type="project" value="UniProtKB-UniRule"/>
</dbReference>
<dbReference type="GO" id="GO:0001682">
    <property type="term" value="P:tRNA 5'-leader removal"/>
    <property type="evidence" value="ECO:0007669"/>
    <property type="project" value="UniProtKB-UniRule"/>
</dbReference>
<dbReference type="CDD" id="cd18691">
    <property type="entry name" value="PIN_VapC-like"/>
    <property type="match status" value="1"/>
</dbReference>
<dbReference type="HAMAP" id="MF_01078">
    <property type="entry name" value="RNA_free_RNase_P"/>
    <property type="match status" value="1"/>
</dbReference>
<dbReference type="InterPro" id="IPR014856">
    <property type="entry name" value="RNA_free_RNase_P"/>
</dbReference>
<dbReference type="NCBIfam" id="NF003341">
    <property type="entry name" value="PRK04358.1-2"/>
    <property type="match status" value="1"/>
</dbReference>
<dbReference type="NCBIfam" id="TIGR03875">
    <property type="entry name" value="RNA_lig_partner"/>
    <property type="match status" value="1"/>
</dbReference>
<dbReference type="PANTHER" id="PTHR41173:SF1">
    <property type="entry name" value="RNA-FREE RIBONUCLEASE P"/>
    <property type="match status" value="1"/>
</dbReference>
<dbReference type="PANTHER" id="PTHR41173">
    <property type="entry name" value="UPF0278 PROTEIN TK1425"/>
    <property type="match status" value="1"/>
</dbReference>
<dbReference type="Pfam" id="PF08745">
    <property type="entry name" value="PIN_5"/>
    <property type="match status" value="1"/>
</dbReference>
<reference key="1">
    <citation type="journal article" date="2004" name="Genome Res.">
        <title>Genome sequence of Haloarcula marismortui: a halophilic archaeon from the Dead Sea.</title>
        <authorList>
            <person name="Baliga N.S."/>
            <person name="Bonneau R."/>
            <person name="Facciotti M.T."/>
            <person name="Pan M."/>
            <person name="Glusman G."/>
            <person name="Deutsch E.W."/>
            <person name="Shannon P."/>
            <person name="Chiu Y."/>
            <person name="Weng R.S."/>
            <person name="Gan R.R."/>
            <person name="Hung P."/>
            <person name="Date S.V."/>
            <person name="Marcotte E."/>
            <person name="Hood L."/>
            <person name="Ng W.V."/>
        </authorList>
    </citation>
    <scope>NUCLEOTIDE SEQUENCE [LARGE SCALE GENOMIC DNA]</scope>
    <source>
        <strain>ATCC 43049 / DSM 3752 / JCM 8966 / VKM B-1809</strain>
    </source>
</reference>
<gene>
    <name type="ordered locus">rrnAC2265</name>
</gene>
<comment type="function">
    <text evidence="1">RNA-free RNase P that catalyzes the removal of the 5'-leader sequence from pre-tRNA to produce the mature 5'-terminus.</text>
</comment>
<comment type="catalytic activity">
    <reaction evidence="1">
        <text>Endonucleolytic cleavage of RNA, removing 5'-extranucleotides from tRNA precursor.</text>
        <dbReference type="EC" id="3.1.26.5"/>
    </reaction>
</comment>
<comment type="similarity">
    <text evidence="1">Belongs to the HARP family.</text>
</comment>
<protein>
    <recommendedName>
        <fullName evidence="1">RNA-free ribonuclease P</fullName>
        <shortName evidence="1">RNA-free RNase P</shortName>
        <ecNumber evidence="1">3.1.26.5</ecNumber>
    </recommendedName>
    <alternativeName>
        <fullName evidence="1">Protein-only RNase P</fullName>
    </alternativeName>
</protein>
<accession>Q5V059</accession>
<organism>
    <name type="scientific">Haloarcula marismortui (strain ATCC 43049 / DSM 3752 / JCM 8966 / VKM B-1809)</name>
    <name type="common">Halobacterium marismortui</name>
    <dbReference type="NCBI Taxonomy" id="272569"/>
    <lineage>
        <taxon>Archaea</taxon>
        <taxon>Methanobacteriati</taxon>
        <taxon>Methanobacteriota</taxon>
        <taxon>Stenosarchaea group</taxon>
        <taxon>Halobacteria</taxon>
        <taxon>Halobacteriales</taxon>
        <taxon>Haloarculaceae</taxon>
        <taxon>Haloarcula</taxon>
    </lineage>
</organism>
<keyword id="KW-0255">Endonuclease</keyword>
<keyword id="KW-0378">Hydrolase</keyword>
<keyword id="KW-0540">Nuclease</keyword>
<keyword id="KW-1185">Reference proteome</keyword>
<keyword id="KW-0819">tRNA processing</keyword>